<dbReference type="EC" id="6.1.1.23" evidence="1"/>
<dbReference type="EMBL" id="AF219996">
    <property type="protein sequence ID" value="AAF61689.1"/>
    <property type="molecule type" value="Genomic_DNA"/>
</dbReference>
<dbReference type="EMBL" id="AP008226">
    <property type="protein sequence ID" value="BAD71275.1"/>
    <property type="molecule type" value="Genomic_DNA"/>
</dbReference>
<dbReference type="RefSeq" id="YP_144718.1">
    <property type="nucleotide sequence ID" value="NC_006461.1"/>
</dbReference>
<dbReference type="PDB" id="1N9W">
    <property type="method" value="X-ray"/>
    <property type="resolution" value="2.30 A"/>
    <property type="chains" value="A/B=1-422"/>
</dbReference>
<dbReference type="PDB" id="3KFU">
    <property type="method" value="X-ray"/>
    <property type="resolution" value="3.00 A"/>
    <property type="chains" value="A/B/C/D=1-422"/>
</dbReference>
<dbReference type="PDBsum" id="1N9W"/>
<dbReference type="PDBsum" id="3KFU"/>
<dbReference type="SMR" id="Q5SIC2"/>
<dbReference type="EnsemblBacteria" id="BAD71275">
    <property type="protein sequence ID" value="BAD71275"/>
    <property type="gene ID" value="BAD71275"/>
</dbReference>
<dbReference type="GeneID" id="3169968"/>
<dbReference type="KEGG" id="ttj:TTHA1452"/>
<dbReference type="PATRIC" id="fig|300852.9.peg.1426"/>
<dbReference type="eggNOG" id="COG0017">
    <property type="taxonomic scope" value="Bacteria"/>
</dbReference>
<dbReference type="HOGENOM" id="CLU_004553_2_1_0"/>
<dbReference type="PhylomeDB" id="Q5SIC2"/>
<dbReference type="BRENDA" id="6.1.1.12">
    <property type="organism ID" value="2305"/>
</dbReference>
<dbReference type="EvolutionaryTrace" id="Q5SIC2"/>
<dbReference type="Proteomes" id="UP000000532">
    <property type="component" value="Chromosome"/>
</dbReference>
<dbReference type="GO" id="GO:0017101">
    <property type="term" value="C:aminoacyl-tRNA synthetase multienzyme complex"/>
    <property type="evidence" value="ECO:0007669"/>
    <property type="project" value="TreeGrafter"/>
</dbReference>
<dbReference type="GO" id="GO:0005829">
    <property type="term" value="C:cytosol"/>
    <property type="evidence" value="ECO:0007669"/>
    <property type="project" value="TreeGrafter"/>
</dbReference>
<dbReference type="GO" id="GO:0004815">
    <property type="term" value="F:aspartate-tRNA ligase activity"/>
    <property type="evidence" value="ECO:0007669"/>
    <property type="project" value="UniProtKB-UniRule"/>
</dbReference>
<dbReference type="GO" id="GO:0050560">
    <property type="term" value="F:aspartate-tRNA(Asn) ligase activity"/>
    <property type="evidence" value="ECO:0007669"/>
    <property type="project" value="UniProtKB-EC"/>
</dbReference>
<dbReference type="GO" id="GO:0005524">
    <property type="term" value="F:ATP binding"/>
    <property type="evidence" value="ECO:0007669"/>
    <property type="project" value="UniProtKB-UniRule"/>
</dbReference>
<dbReference type="GO" id="GO:0003723">
    <property type="term" value="F:RNA binding"/>
    <property type="evidence" value="ECO:0007669"/>
    <property type="project" value="TreeGrafter"/>
</dbReference>
<dbReference type="GO" id="GO:0006422">
    <property type="term" value="P:aspartyl-tRNA aminoacylation"/>
    <property type="evidence" value="ECO:0007669"/>
    <property type="project" value="UniProtKB-UniRule"/>
</dbReference>
<dbReference type="CDD" id="cd00776">
    <property type="entry name" value="AsxRS_core"/>
    <property type="match status" value="1"/>
</dbReference>
<dbReference type="FunFam" id="3.30.930.10:FF:000038">
    <property type="entry name" value="Aspartate--tRNA ligase"/>
    <property type="match status" value="1"/>
</dbReference>
<dbReference type="Gene3D" id="3.30.930.10">
    <property type="entry name" value="Bira Bifunctional Protein, Domain 2"/>
    <property type="match status" value="1"/>
</dbReference>
<dbReference type="Gene3D" id="2.40.50.140">
    <property type="entry name" value="Nucleic acid-binding proteins"/>
    <property type="match status" value="1"/>
</dbReference>
<dbReference type="HAMAP" id="MF_02075">
    <property type="entry name" value="Asp_tRNA_synth_type2"/>
    <property type="match status" value="1"/>
</dbReference>
<dbReference type="InterPro" id="IPR004364">
    <property type="entry name" value="Aa-tRNA-synt_II"/>
</dbReference>
<dbReference type="InterPro" id="IPR006195">
    <property type="entry name" value="aa-tRNA-synth_II"/>
</dbReference>
<dbReference type="InterPro" id="IPR045864">
    <property type="entry name" value="aa-tRNA-synth_II/BPL/LPL"/>
</dbReference>
<dbReference type="InterPro" id="IPR004523">
    <property type="entry name" value="Asp-tRNA_synthase_2"/>
</dbReference>
<dbReference type="InterPro" id="IPR002312">
    <property type="entry name" value="Asp/Asn-tRNA-synth_IIb"/>
</dbReference>
<dbReference type="InterPro" id="IPR012340">
    <property type="entry name" value="NA-bd_OB-fold"/>
</dbReference>
<dbReference type="InterPro" id="IPR004365">
    <property type="entry name" value="NA-bd_OB_tRNA"/>
</dbReference>
<dbReference type="NCBIfam" id="TIGR00458">
    <property type="entry name" value="aspS_nondisc"/>
    <property type="match status" value="1"/>
</dbReference>
<dbReference type="NCBIfam" id="NF003483">
    <property type="entry name" value="PRK05159.1"/>
    <property type="match status" value="1"/>
</dbReference>
<dbReference type="PANTHER" id="PTHR43450:SF1">
    <property type="entry name" value="ASPARTATE--TRNA LIGASE, CYTOPLASMIC"/>
    <property type="match status" value="1"/>
</dbReference>
<dbReference type="PANTHER" id="PTHR43450">
    <property type="entry name" value="ASPARTYL-TRNA SYNTHETASE"/>
    <property type="match status" value="1"/>
</dbReference>
<dbReference type="Pfam" id="PF00152">
    <property type="entry name" value="tRNA-synt_2"/>
    <property type="match status" value="1"/>
</dbReference>
<dbReference type="Pfam" id="PF01336">
    <property type="entry name" value="tRNA_anti-codon"/>
    <property type="match status" value="1"/>
</dbReference>
<dbReference type="PRINTS" id="PR01042">
    <property type="entry name" value="TRNASYNTHASP"/>
</dbReference>
<dbReference type="SUPFAM" id="SSF55681">
    <property type="entry name" value="Class II aaRS and biotin synthetases"/>
    <property type="match status" value="1"/>
</dbReference>
<dbReference type="SUPFAM" id="SSF50249">
    <property type="entry name" value="Nucleic acid-binding proteins"/>
    <property type="match status" value="1"/>
</dbReference>
<dbReference type="PROSITE" id="PS50862">
    <property type="entry name" value="AA_TRNA_LIGASE_II"/>
    <property type="match status" value="1"/>
</dbReference>
<reference key="1">
    <citation type="journal article" date="2000" name="Biochemistry">
        <title>Thermus thermophilus contains an eubacterial and an archaebacterial aspartyl-tRNA synthetase.</title>
        <authorList>
            <person name="Becker H.D."/>
            <person name="Roy H."/>
            <person name="Moulinier L."/>
            <person name="Mazauric M.H."/>
            <person name="Keith G."/>
            <person name="Kern D."/>
        </authorList>
    </citation>
    <scope>NUCLEOTIDE SEQUENCE [GENOMIC DNA]</scope>
    <scope>GENE NAME</scope>
    <scope>FUNCTION AS A NON-DISCRIMINATING ASPRS</scope>
    <scope>CATALYTIC ACTIVITY</scope>
    <scope>SUBSTRATE SPECIFICITY</scope>
    <scope>KINETIC PARAMETERS</scope>
    <source>
        <strain>ATCC 27634 / DSM 579 / HB8</strain>
    </source>
</reference>
<reference key="2">
    <citation type="submission" date="2004-11" db="EMBL/GenBank/DDBJ databases">
        <title>Complete genome sequence of Thermus thermophilus HB8.</title>
        <authorList>
            <person name="Masui R."/>
            <person name="Kurokawa K."/>
            <person name="Nakagawa N."/>
            <person name="Tokunaga F."/>
            <person name="Koyama Y."/>
            <person name="Shibata T."/>
            <person name="Oshima T."/>
            <person name="Yokoyama S."/>
            <person name="Yasunaga T."/>
            <person name="Kuramitsu S."/>
        </authorList>
    </citation>
    <scope>NUCLEOTIDE SEQUENCE [LARGE SCALE GENOMIC DNA]</scope>
    <source>
        <strain>ATCC 27634 / DSM 579 / HB8</strain>
    </source>
</reference>
<reference key="3">
    <citation type="journal article" date="1997" name="Biochemistry">
        <title>Existence of two distinct aspartyl-tRNA synthetases in Thermus thermophilus. Structural and biochemical properties of the two enzymes.</title>
        <authorList>
            <person name="Becker H.D."/>
            <person name="Reinbolt J."/>
            <person name="Kreutzer R."/>
            <person name="Giege R."/>
            <person name="Kern D."/>
        </authorList>
    </citation>
    <scope>PROTEIN SEQUENCE OF 1-49</scope>
    <scope>FUNCTION</scope>
    <scope>CATALYTIC ACTIVITY</scope>
    <scope>KINETIC PARAMETERS</scope>
    <scope>SUBUNIT</scope>
    <scope>INDUCTION</scope>
    <source>
        <strain>ATCC 27634 / DSM 579 / HB8</strain>
    </source>
</reference>
<reference key="4">
    <citation type="journal article" date="2003" name="EMBO J.">
        <title>Non-discriminating and discriminating aspartyl-tRNA synthetases differ in the anticodon-binding domain.</title>
        <authorList>
            <person name="Charron C."/>
            <person name="Roy H."/>
            <person name="Blaise M."/>
            <person name="Giege R."/>
            <person name="Kern D."/>
        </authorList>
    </citation>
    <scope>X-RAY CRYSTALLOGRAPHY (2.30 ANGSTROMS)</scope>
    <scope>SUBUNIT</scope>
    <source>
        <strain>ATCC 27634 / DSM 579 / HB8</strain>
    </source>
</reference>
<reference key="5">
    <citation type="journal article" date="2010" name="EMBO J.">
        <title>Crystal structure of a transfer-ribonucleoprotein particle that promotes asparagine formation.</title>
        <authorList>
            <person name="Blaise M."/>
            <person name="Bailly M."/>
            <person name="Frechin M."/>
            <person name="Behrens M.A."/>
            <person name="Fischer F."/>
            <person name="Oliveira C.L."/>
            <person name="Becker H.D."/>
            <person name="Pedersen J.S."/>
            <person name="Thirup S."/>
            <person name="Kern D."/>
        </authorList>
    </citation>
    <scope>X-RAY CRYSTALLOGRAPHY (3.00 ANGSTROMS) IN COMPLEX WITH TRNA(ASN); GATA; GATB AND GATC</scope>
    <scope>IDENTIFICATION IN THE TRANSAMIDOSOME COMPLEX</scope>
    <scope>SUBUNIT</scope>
</reference>
<keyword id="KW-0002">3D-structure</keyword>
<keyword id="KW-0030">Aminoacyl-tRNA synthetase</keyword>
<keyword id="KW-0067">ATP-binding</keyword>
<keyword id="KW-0963">Cytoplasm</keyword>
<keyword id="KW-0903">Direct protein sequencing</keyword>
<keyword id="KW-0436">Ligase</keyword>
<keyword id="KW-0547">Nucleotide-binding</keyword>
<keyword id="KW-0648">Protein biosynthesis</keyword>
<keyword id="KW-1185">Reference proteome</keyword>
<sequence length="422" mass="48329">MRVLVRDLKAHVGQEVELLGFLHWRRDLGRIQFLLLRDRSGVVQVVTGGLKLPLPESALRVRGLVVENAKAPGGLEVQAKEVEVLSPALEPTPVEIPKEEWRANPDTLLEYRYVTLRGEKARAPLKVQAALVRGFRRYLDRQDFTEIFTPKVVRAGAEGGSGLFGVDYFEKRAYLAQSPQLYKQIMVGVFERVYEVAPVWRMEEHHTSRHLNEYLSLDVEMGFIADEEDLMRLEEALLAEMLEEALNTAGDEIRLLGATWPSFPQDIPRLTHAEAKRILKEELGYPVGQDLSEEAERLLGEYAKERWGSDWLFVTRYPRSVRPFYTYPEEDGTTRSFDLLFRGLEITSGGQRIHRYEELLESLKAKGMDPEAFHGYLEVFKYGMPPHGGFAIGAERLTQKLLGLPNVRYARAFPRDRHRLTP</sequence>
<feature type="chain" id="PRO_0000429273" description="Aspartate--tRNA(Asp/Asn) ligase">
    <location>
        <begin position="1"/>
        <end position="422"/>
    </location>
</feature>
<feature type="region of interest" description="Aspartate" evidence="1">
    <location>
        <begin position="180"/>
        <end position="183"/>
    </location>
</feature>
<feature type="binding site" evidence="1">
    <location>
        <position position="158"/>
    </location>
    <ligand>
        <name>L-aspartate</name>
        <dbReference type="ChEBI" id="CHEBI:29991"/>
    </ligand>
</feature>
<feature type="binding site" evidence="1">
    <location>
        <begin position="201"/>
        <end position="203"/>
    </location>
    <ligand>
        <name>ATP</name>
        <dbReference type="ChEBI" id="CHEBI:30616"/>
    </ligand>
</feature>
<feature type="binding site" evidence="1">
    <location>
        <position position="201"/>
    </location>
    <ligand>
        <name>L-aspartate</name>
        <dbReference type="ChEBI" id="CHEBI:29991"/>
    </ligand>
</feature>
<feature type="binding site" evidence="1">
    <location>
        <begin position="209"/>
        <end position="211"/>
    </location>
    <ligand>
        <name>ATP</name>
        <dbReference type="ChEBI" id="CHEBI:30616"/>
    </ligand>
</feature>
<feature type="binding site" evidence="1">
    <location>
        <position position="345"/>
    </location>
    <ligand>
        <name>ATP</name>
        <dbReference type="ChEBI" id="CHEBI:30616"/>
    </ligand>
</feature>
<feature type="binding site" evidence="1">
    <location>
        <position position="348"/>
    </location>
    <ligand>
        <name>L-aspartate</name>
        <dbReference type="ChEBI" id="CHEBI:29991"/>
    </ligand>
</feature>
<feature type="binding site" evidence="1">
    <location>
        <position position="352"/>
    </location>
    <ligand>
        <name>L-aspartate</name>
        <dbReference type="ChEBI" id="CHEBI:29991"/>
    </ligand>
</feature>
<feature type="binding site" evidence="1">
    <location>
        <begin position="393"/>
        <end position="396"/>
    </location>
    <ligand>
        <name>ATP</name>
        <dbReference type="ChEBI" id="CHEBI:30616"/>
    </ligand>
</feature>
<feature type="site" description="Interaction with tRNA">
    <location>
        <position position="26"/>
    </location>
</feature>
<feature type="site" description="Interaction with tRNA">
    <location>
        <position position="44"/>
    </location>
</feature>
<feature type="site" description="Interaction with tRNA">
    <location>
        <position position="68"/>
    </location>
</feature>
<feature type="site" description="Important for tRNA non-discrimination" evidence="1">
    <location>
        <position position="72"/>
    </location>
</feature>
<feature type="site" description="Interaction with tRNA">
    <location>
        <position position="76"/>
    </location>
</feature>
<feature type="helix" evidence="6">
    <location>
        <begin position="5"/>
        <end position="10"/>
    </location>
</feature>
<feature type="strand" evidence="6">
    <location>
        <begin position="14"/>
        <end position="27"/>
    </location>
</feature>
<feature type="strand" evidence="6">
    <location>
        <begin position="29"/>
        <end position="38"/>
    </location>
</feature>
<feature type="strand" evidence="6">
    <location>
        <begin position="41"/>
        <end position="49"/>
    </location>
</feature>
<feature type="strand" evidence="6">
    <location>
        <begin position="58"/>
        <end position="67"/>
    </location>
</feature>
<feature type="strand" evidence="6">
    <location>
        <begin position="74"/>
        <end position="86"/>
    </location>
</feature>
<feature type="helix" evidence="7">
    <location>
        <begin position="96"/>
        <end position="98"/>
    </location>
</feature>
<feature type="helix" evidence="7">
    <location>
        <begin position="107"/>
        <end position="110"/>
    </location>
</feature>
<feature type="helix" evidence="6">
    <location>
        <begin position="112"/>
        <end position="115"/>
    </location>
</feature>
<feature type="helix" evidence="6">
    <location>
        <begin position="119"/>
        <end position="141"/>
    </location>
</feature>
<feature type="helix" evidence="6">
    <location>
        <begin position="180"/>
        <end position="190"/>
    </location>
</feature>
<feature type="strand" evidence="6">
    <location>
        <begin position="191"/>
        <end position="198"/>
    </location>
</feature>
<feature type="strand" evidence="6">
    <location>
        <begin position="215"/>
        <end position="223"/>
    </location>
</feature>
<feature type="helix" evidence="6">
    <location>
        <begin position="227"/>
        <end position="248"/>
    </location>
</feature>
<feature type="helix" evidence="6">
    <location>
        <begin position="250"/>
        <end position="255"/>
    </location>
</feature>
<feature type="strand" evidence="6">
    <location>
        <begin position="264"/>
        <end position="266"/>
    </location>
</feature>
<feature type="strand" evidence="6">
    <location>
        <begin position="269"/>
        <end position="271"/>
    </location>
</feature>
<feature type="helix" evidence="6">
    <location>
        <begin position="272"/>
        <end position="281"/>
    </location>
</feature>
<feature type="helix" evidence="6">
    <location>
        <begin position="293"/>
        <end position="306"/>
    </location>
</feature>
<feature type="strand" evidence="6">
    <location>
        <begin position="310"/>
        <end position="315"/>
    </location>
</feature>
<feature type="helix" evidence="6">
    <location>
        <begin position="319"/>
        <end position="321"/>
    </location>
</feature>
<feature type="strand" evidence="6">
    <location>
        <begin position="332"/>
        <end position="341"/>
    </location>
</feature>
<feature type="strand" evidence="6">
    <location>
        <begin position="344"/>
        <end position="352"/>
    </location>
</feature>
<feature type="helix" evidence="6">
    <location>
        <begin position="356"/>
        <end position="365"/>
    </location>
</feature>
<feature type="helix" evidence="6">
    <location>
        <begin position="370"/>
        <end position="373"/>
    </location>
</feature>
<feature type="helix" evidence="6">
    <location>
        <begin position="374"/>
        <end position="377"/>
    </location>
</feature>
<feature type="helix" evidence="6">
    <location>
        <begin position="378"/>
        <end position="381"/>
    </location>
</feature>
<feature type="strand" evidence="6">
    <location>
        <begin position="386"/>
        <end position="393"/>
    </location>
</feature>
<feature type="helix" evidence="6">
    <location>
        <begin position="394"/>
        <end position="401"/>
    </location>
</feature>
<feature type="helix" evidence="6">
    <location>
        <begin position="407"/>
        <end position="410"/>
    </location>
</feature>
<proteinExistence type="evidence at protein level"/>
<comment type="function">
    <text evidence="2 5">Aspartyl-tRNA synthetase with relaxed tRNA specificity since it is able to aspartylate not only its cognate tRNA(Asp) but also tRNA(Asn) with similar efficiencies. Reaction proceeds in two steps: L-aspartate is first activated by ATP to form Asp-AMP and then transferred to the acceptor end of tRNA(Asp/Asn).</text>
</comment>
<comment type="catalytic activity">
    <reaction evidence="1 2 5">
        <text>tRNA(Asx) + L-aspartate + ATP = L-aspartyl-tRNA(Asx) + AMP + diphosphate</text>
        <dbReference type="Rhea" id="RHEA:18349"/>
        <dbReference type="Rhea" id="RHEA-COMP:9710"/>
        <dbReference type="Rhea" id="RHEA-COMP:9711"/>
        <dbReference type="ChEBI" id="CHEBI:29991"/>
        <dbReference type="ChEBI" id="CHEBI:30616"/>
        <dbReference type="ChEBI" id="CHEBI:33019"/>
        <dbReference type="ChEBI" id="CHEBI:78442"/>
        <dbReference type="ChEBI" id="CHEBI:78516"/>
        <dbReference type="ChEBI" id="CHEBI:456215"/>
        <dbReference type="EC" id="6.1.1.23"/>
    </reaction>
</comment>
<comment type="biophysicochemical properties">
    <kinetics>
        <KM evidence="2 5">3 uM for L-aspartate (at 37 degrees Celsius)</KM>
        <KM evidence="2 5">5 uM for L-aspartate (at 70 degrees Celsius)</KM>
        <KM evidence="2 5">60 uM for ATP (at 37 degrees Celsius)</KM>
        <KM evidence="2 5">33 uM for ATP (at 70 degrees Celsius)</KM>
        <KM evidence="2 5">0.043 uM for tRNA(Asp) (at 37 degrees Celsius)</KM>
        <KM evidence="2 5">0.073 uM for tRNA(Asp) (at 70 degrees Celsius)</KM>
        <KM evidence="2 5">0.063 uM for tRNA(Asn) (at 70 degrees Celsius)</KM>
        <text>kcat is 0.09 sec(-1) for tRNA aspartylation at 37 degrees Celsius and 0.24 sec(-1) at 70 degrees Celsius. kcat is 0.092 sec(-1) for tRNA(Asn) aspartylation at 70 degrees Celsius.</text>
    </kinetics>
</comment>
<comment type="subunit">
    <text evidence="3 4 5">Homodimer. Makes part of a ribonucleoprotein particle (RNP) called transamidosome that allows channelling of the aa-tRNA from non-discriminating aspartyl-tRNA synthetase active site to the GatCAB amidotransferase site. The transamidosome complex is formed by two GatCABs, one dimeric ND-AspRSs and two tRNAs(Asn) molecules.</text>
</comment>
<comment type="subcellular location">
    <subcellularLocation>
        <location evidence="1">Cytoplasm</location>
    </subcellularLocation>
</comment>
<comment type="induction">
    <text evidence="5">Constitutively expressed in a constant ratio along the growth of the bacterium.</text>
</comment>
<comment type="miscellaneous">
    <text>Aspartate mischarged on tRNA(Asn) is then converted into asparagine by the tRNA-dependent amidotransferase GatCAB.</text>
</comment>
<comment type="similarity">
    <text evidence="1">Belongs to the class-II aminoacyl-tRNA synthetase family. Type 2 subfamily.</text>
</comment>
<gene>
    <name type="primary">aspS2</name>
    <name type="ordered locus">TTHA1452</name>
</gene>
<protein>
    <recommendedName>
        <fullName evidence="1">Aspartate--tRNA(Asp/Asn) ligase</fullName>
        <ecNumber evidence="1">6.1.1.23</ecNumber>
    </recommendedName>
    <alternativeName>
        <fullName>Aspartyl-tRNA synthetase 2</fullName>
        <shortName>AspRS2</shortName>
    </alternativeName>
    <alternativeName>
        <fullName evidence="1">Non-discriminating aspartyl-tRNA synthetase</fullName>
        <shortName evidence="1">ND-AspRS</shortName>
    </alternativeName>
</protein>
<organism>
    <name type="scientific">Thermus thermophilus (strain ATCC 27634 / DSM 579 / HB8)</name>
    <dbReference type="NCBI Taxonomy" id="300852"/>
    <lineage>
        <taxon>Bacteria</taxon>
        <taxon>Thermotogati</taxon>
        <taxon>Deinococcota</taxon>
        <taxon>Deinococci</taxon>
        <taxon>Thermales</taxon>
        <taxon>Thermaceae</taxon>
        <taxon>Thermus</taxon>
    </lineage>
</organism>
<evidence type="ECO:0000255" key="1">
    <source>
        <dbReference type="HAMAP-Rule" id="MF_02075"/>
    </source>
</evidence>
<evidence type="ECO:0000269" key="2">
    <source>
    </source>
</evidence>
<evidence type="ECO:0000269" key="3">
    <source>
    </source>
</evidence>
<evidence type="ECO:0000269" key="4">
    <source>
    </source>
</evidence>
<evidence type="ECO:0000269" key="5">
    <source>
    </source>
</evidence>
<evidence type="ECO:0007829" key="6">
    <source>
        <dbReference type="PDB" id="1N9W"/>
    </source>
</evidence>
<evidence type="ECO:0007829" key="7">
    <source>
        <dbReference type="PDB" id="3KFU"/>
    </source>
</evidence>
<accession>Q5SIC2</accession>
<accession>Q9LCY8</accession>
<name>SYDND_THET8</name>